<dbReference type="EC" id="3.4.22.70" evidence="5 7 10 11 12 13 14"/>
<dbReference type="EMBL" id="CP000253">
    <property type="protein sequence ID" value="ABD31836.1"/>
    <property type="molecule type" value="Genomic_DNA"/>
</dbReference>
<dbReference type="RefSeq" id="WP_000759361.1">
    <property type="nucleotide sequence ID" value="NZ_LS483365.1"/>
</dbReference>
<dbReference type="RefSeq" id="YP_501293.1">
    <property type="nucleotide sequence ID" value="NC_007795.1"/>
</dbReference>
<dbReference type="PDB" id="1IJA">
    <property type="method" value="NMR"/>
    <property type="chains" value="A=59-206"/>
</dbReference>
<dbReference type="PDB" id="1T2O">
    <property type="method" value="X-ray"/>
    <property type="resolution" value="2.30 A"/>
    <property type="chains" value="A/B/C=61-206"/>
</dbReference>
<dbReference type="PDB" id="1T2P">
    <property type="method" value="X-ray"/>
    <property type="resolution" value="2.00 A"/>
    <property type="chains" value="A/B/C=61-206"/>
</dbReference>
<dbReference type="PDB" id="1T2W">
    <property type="method" value="X-ray"/>
    <property type="resolution" value="1.80 A"/>
    <property type="chains" value="A/B/C=62-206"/>
</dbReference>
<dbReference type="PDB" id="2KID">
    <property type="method" value="NMR"/>
    <property type="chains" value="A=59-206"/>
</dbReference>
<dbReference type="PDB" id="6R1V">
    <property type="method" value="NMR"/>
    <property type="chains" value="A=59-206"/>
</dbReference>
<dbReference type="PDB" id="7S54">
    <property type="method" value="X-ray"/>
    <property type="resolution" value="1.79 A"/>
    <property type="chains" value="A/B=185-199"/>
</dbReference>
<dbReference type="PDBsum" id="1IJA"/>
<dbReference type="PDBsum" id="1T2O"/>
<dbReference type="PDBsum" id="1T2P"/>
<dbReference type="PDBsum" id="1T2W"/>
<dbReference type="PDBsum" id="2KID"/>
<dbReference type="PDBsum" id="6R1V"/>
<dbReference type="PDBsum" id="7S54"/>
<dbReference type="BMRB" id="Q2FV99"/>
<dbReference type="SMR" id="Q2FV99"/>
<dbReference type="STRING" id="93061.SAOUHSC_02834"/>
<dbReference type="MEROPS" id="C60.001"/>
<dbReference type="PaxDb" id="1280-SAXN108_2777"/>
<dbReference type="GeneID" id="3921273"/>
<dbReference type="KEGG" id="sao:SAOUHSC_02834"/>
<dbReference type="PATRIC" id="fig|93061.5.peg.2564"/>
<dbReference type="eggNOG" id="COG3764">
    <property type="taxonomic scope" value="Bacteria"/>
</dbReference>
<dbReference type="HOGENOM" id="CLU_1405331_0_0_9"/>
<dbReference type="OrthoDB" id="2987398at2"/>
<dbReference type="PHI-base" id="PHI:3982"/>
<dbReference type="PHI-base" id="PHI:6429"/>
<dbReference type="PHI-base" id="PHI:6584"/>
<dbReference type="Proteomes" id="UP000008816">
    <property type="component" value="Chromosome"/>
</dbReference>
<dbReference type="GO" id="GO:0005886">
    <property type="term" value="C:plasma membrane"/>
    <property type="evidence" value="ECO:0007669"/>
    <property type="project" value="UniProtKB-SubCell"/>
</dbReference>
<dbReference type="GO" id="GO:0008234">
    <property type="term" value="F:cysteine-type peptidase activity"/>
    <property type="evidence" value="ECO:0007669"/>
    <property type="project" value="UniProtKB-KW"/>
</dbReference>
<dbReference type="GO" id="GO:0046872">
    <property type="term" value="F:metal ion binding"/>
    <property type="evidence" value="ECO:0007669"/>
    <property type="project" value="UniProtKB-KW"/>
</dbReference>
<dbReference type="GO" id="GO:0006508">
    <property type="term" value="P:proteolysis"/>
    <property type="evidence" value="ECO:0007669"/>
    <property type="project" value="UniProtKB-KW"/>
</dbReference>
<dbReference type="CDD" id="cd06165">
    <property type="entry name" value="Sortase_A"/>
    <property type="match status" value="1"/>
</dbReference>
<dbReference type="Gene3D" id="2.40.260.10">
    <property type="entry name" value="Sortase"/>
    <property type="match status" value="1"/>
</dbReference>
<dbReference type="InterPro" id="IPR005754">
    <property type="entry name" value="Sortase"/>
</dbReference>
<dbReference type="InterPro" id="IPR042007">
    <property type="entry name" value="Sortase_A"/>
</dbReference>
<dbReference type="InterPro" id="IPR023365">
    <property type="entry name" value="Sortase_dom-sf"/>
</dbReference>
<dbReference type="NCBIfam" id="TIGR01076">
    <property type="entry name" value="sortase_fam"/>
    <property type="match status" value="1"/>
</dbReference>
<dbReference type="Pfam" id="PF04203">
    <property type="entry name" value="Sortase"/>
    <property type="match status" value="1"/>
</dbReference>
<dbReference type="SUPFAM" id="SSF63817">
    <property type="entry name" value="Sortase"/>
    <property type="match status" value="1"/>
</dbReference>
<sequence length="206" mass="23541">MKKWTNRLMTIAGVVLILVAAYLFAKPHIDNYLHDKDKDEKIEQYDKNVKEQASKDKKQQAKPQIPKDKSKVAGYIEIPDADIKEPVYPGPATPEQLNRGVSFAEENESLDDQNISIAGHTFIDRPNYQFTNLKAAKKGSMVYFKVGNETRKYKMTSIRDVKPTDVGVLDEQKGKDKQLTLITCDDYNEKTGVWEKRKIFVATEVK</sequence>
<gene>
    <name evidence="18" type="primary">srtA</name>
    <name evidence="27" type="ordered locus">SAOUHSC_02834</name>
</gene>
<name>SRTA_STAA8</name>
<comment type="function">
    <text evidence="3 4 5 6 8 9 11 12">Transpeptidase that anchors surface proteins to the cell wall (PubMed:10427003, PubMed:10446208, PubMed:10535938, PubMed:11714722, PubMed:14769030, PubMed:15247224). Recognizes and modifies its substrate by proteolytic cleavage of a C-terminal sorting signal. Following cleavage, a covalent intermediate is formed via a thioester bond between the sortase and its substrate, which is then transferred and covalently attached to the cell wall (PubMed:10446208, PubMed:10535938, PubMed:11714722, PubMed:14769030, PubMed:15247224). This sortase recognizes a Leu-Pro-x-Thr-Gly (LPXTG) motif, which is cleaved by the sortase between the threonine and glycine residues (PubMed:10535938, PubMed:11714722, PubMed:14769030, PubMed:15247224). Utilizes lipid II as the peptidoglycan substrate for the sorting reaction (PubMed:10446208, PubMed:11856734). Responsible for the display of important virulence factors (PubMed:14769030). Important for interactions with the host and host colonization during infection (PubMed:10805806, PubMed:14769030).</text>
</comment>
<comment type="catalytic activity">
    <reaction evidence="5 7 10 11 12 13 14">
        <text>The enzyme catalyzes a cell wall sorting reaction in which a surface protein with a sorting signal containing a LPXTG motif is cleaved between the Thr and Gly residue. The resulting threonine carboxyl end of the protein is covalently attached to a pentaglycine cross-bridge of peptidoglycan.</text>
        <dbReference type="EC" id="3.4.22.70"/>
    </reaction>
</comment>
<comment type="activity regulation">
    <text evidence="4 5 7 13 17">Sortase activity is regulated by monomer-homodimer equilibrium. Mutant cells with monomeric SrtA display more adhesive proteins on the cell surface and are more invasive than wild-type cells, which have majority of SrtA in dimeric form. Dimerization may suppress the enzymatic activity on cell membranes (PubMed:26129884). Stimulated by calcium ions, which promote substrate binding (PubMed:11371637, PubMed:16269411). Calcium ions bind to SrtA and modulate both the structure and dynamics of a large active site loop (PubMed:16269411). Can also be stimulated, to a lesser extent, by Mg(2+) and Mn(2+) (PubMed:11371637). Inhibited by sulfhydryl-modifying reagents (PubMed:10446208, PubMed:10535938).</text>
</comment>
<comment type="subunit">
    <text evidence="15 17">Monomer and homodimer; in equilibrium.</text>
</comment>
<comment type="subcellular location">
    <subcellularLocation>
        <location evidence="17 20">Cell membrane</location>
        <topology evidence="20">Single-pass type II membrane protein</topology>
    </subcellularLocation>
</comment>
<comment type="disruption phenotype">
    <text evidence="3 6">Mutants fail to cleave and anchor surface proteins (PubMed:10427003, PubMed:10805806). Protein secretion pathway is not affected (PubMed:10805806). Mutants are defective in the establishment of animal infections (PubMed:10805806).</text>
</comment>
<comment type="biotechnology">
    <text evidence="22">Could be used as a target for the development of antivirulence chemotherapeutics against Gram-positive bacterial pathogens.</text>
</comment>
<comment type="similarity">
    <text evidence="19">Belongs to the bacterial sortase family. Class A subfamily.</text>
</comment>
<proteinExistence type="evidence at protein level"/>
<accession>Q2FV99</accession>
<keyword id="KW-0002">3D-structure</keyword>
<keyword id="KW-1003">Cell membrane</keyword>
<keyword id="KW-0378">Hydrolase</keyword>
<keyword id="KW-0472">Membrane</keyword>
<keyword id="KW-0479">Metal-binding</keyword>
<keyword id="KW-0645">Protease</keyword>
<keyword id="KW-1185">Reference proteome</keyword>
<keyword id="KW-0788">Thiol protease</keyword>
<keyword id="KW-0812">Transmembrane</keyword>
<keyword id="KW-1133">Transmembrane helix</keyword>
<reference key="1">
    <citation type="book" date="2006" name="Gram positive pathogens, 2nd edition">
        <title>The Staphylococcus aureus NCTC 8325 genome.</title>
        <editorList>
            <person name="Fischetti V."/>
            <person name="Novick R."/>
            <person name="Ferretti J."/>
            <person name="Portnoy D."/>
            <person name="Rood J."/>
        </editorList>
        <authorList>
            <person name="Gillaspy A.F."/>
            <person name="Worrell V."/>
            <person name="Orvis J."/>
            <person name="Roe B.A."/>
            <person name="Dyer D.W."/>
            <person name="Iandolo J.J."/>
        </authorList>
    </citation>
    <scope>NUCLEOTIDE SEQUENCE [LARGE SCALE GENOMIC DNA]</scope>
    <source>
        <strain>NCTC 8325 / PS 47</strain>
    </source>
</reference>
<reference key="2">
    <citation type="journal article" date="1999" name="Science">
        <title>Staphylococcus aureus sortase, an enzyme that anchors surface proteins to the cell wall.</title>
        <authorList>
            <person name="Mazmanian S.K."/>
            <person name="Liu G."/>
            <person name="Ton-That H."/>
            <person name="Schneewind O."/>
        </authorList>
    </citation>
    <scope>FUNCTION</scope>
    <scope>DISRUPTION PHENOTYPE</scope>
</reference>
<reference key="3">
    <citation type="journal article" date="1999" name="J. Biol. Chem.">
        <title>Anchor structure of staphylococcal surface proteins. IV. Inhibitors of the cell wall sorting reaction.</title>
        <authorList>
            <person name="Ton-That H."/>
            <person name="Schneewind O."/>
        </authorList>
    </citation>
    <scope>FUNCTION</scope>
    <scope>ACTIVITY REGULATION</scope>
</reference>
<reference key="4">
    <citation type="journal article" date="1999" name="Proc. Natl. Acad. Sci. U.S.A.">
        <title>Purification and characterization of sortase, the transpeptidase that cleaves surface proteins of Staphylococcus aureus at the LPXTG motif.</title>
        <authorList>
            <person name="Ton-That H."/>
            <person name="Liu G."/>
            <person name="Mazmanian S.K."/>
            <person name="Faull K.F."/>
            <person name="Schneewind O."/>
        </authorList>
    </citation>
    <scope>FUNCTION</scope>
    <scope>CATALYTIC ACTIVITY</scope>
    <scope>ACTIVITY REGULATION</scope>
    <scope>MUTAGENESIS OF CYS-184</scope>
    <source>
        <strain>BB270</strain>
        <strain>RN4220 / OS2</strain>
    </source>
</reference>
<reference key="5">
    <citation type="journal article" date="2000" name="Proc. Natl. Acad. Sci. U.S.A.">
        <title>Staphylococcus aureus sortase mutants defective in the display of surface proteins and in the pathogenesis of animal infections.</title>
        <authorList>
            <person name="Mazmanian S.K."/>
            <person name="Liu G."/>
            <person name="Jensen E.R."/>
            <person name="Lenoy E."/>
            <person name="Schneewind O."/>
        </authorList>
    </citation>
    <scope>FUNCTION</scope>
    <scope>DISRUPTION PHENOTYPE</scope>
</reference>
<reference key="6">
    <citation type="journal article" date="2002" name="J. Biol. Chem.">
        <title>Anchoring of surface proteins to the cell wall of Staphylococcus aureus. Cysteine 184 and histidine 120 of sortase form a thiolate-imidazolium ion pair for catalysis.</title>
        <authorList>
            <person name="Ton-That H."/>
            <person name="Mazmanian S.K."/>
            <person name="Alksne L."/>
            <person name="Schneewind O."/>
        </authorList>
    </citation>
    <scope>FUNCTION</scope>
    <scope>MUTAGENESIS OF HIS-120; CYS-184 AND TRP-194</scope>
    <scope>ACTIVE SITE</scope>
</reference>
<reference key="7">
    <citation type="journal article" date="2002" name="J. Biol. Chem.">
        <title>Anchoring of surface proteins to the cell wall of Staphylococcus aureus. III. Lipid II is an in vivo peptidoglycan substrate for sortase-catalyzed surface protein anchoring.</title>
        <authorList>
            <person name="Perry A.M."/>
            <person name="Ton-That H."/>
            <person name="Mazmanian S.K."/>
            <person name="Schneewind O."/>
        </authorList>
    </citation>
    <scope>FUNCTION</scope>
</reference>
<reference key="8">
    <citation type="journal article" date="2003" name="Biochemistry">
        <title>Kinetic mechanism of Staphylococcus aureus sortase SrtA.</title>
        <authorList>
            <person name="Huang X."/>
            <person name="Aulabaugh A."/>
            <person name="Ding W."/>
            <person name="Kapoor B."/>
            <person name="Alksne L."/>
            <person name="Tabei K."/>
            <person name="Ellestad G."/>
        </authorList>
    </citation>
    <scope>CATALYTIC ACTIVITY</scope>
</reference>
<reference key="9">
    <citation type="journal article" date="2004" name="Biochemistry">
        <title>Analysis of the substrate specificity of the Staphylococcus aureus sortase transpeptidase SrtA.</title>
        <authorList>
            <person name="Kruger R.G."/>
            <person name="Otvos B."/>
            <person name="Frankel B.A."/>
            <person name="Bentley M."/>
            <person name="Dostal P."/>
            <person name="McCafferty D.G."/>
        </authorList>
    </citation>
    <scope>FUNCTION</scope>
    <scope>CATALYTIC ACTIVITY</scope>
    <scope>BIOTECHNOLOGY</scope>
</reference>
<reference key="10">
    <citation type="journal article" date="2004" name="J. Biol. Chem.">
        <title>Anchoring of surface proteins to the cell wall of Staphylococcus aureus. A conserved arginine residue is required for efficient catalysis of sortase A.</title>
        <authorList>
            <person name="Marraffini L.A."/>
            <person name="Ton-That H."/>
            <person name="Zong Y."/>
            <person name="Narayana S.V."/>
            <person name="Schneewind O."/>
        </authorList>
    </citation>
    <scope>FUNCTION</scope>
    <scope>CATALYTIC ACTIVITY</scope>
    <scope>MUTAGENESIS OF ASN-98; CYS-184 AND ARG-197</scope>
    <scope>ACTIVE SITE</scope>
</reference>
<reference key="11">
    <citation type="journal article" date="2006" name="J. Biol. Chem.">
        <title>Staphylococcus aureus sortase A transpeptidase. Calcium promotes sorting signal binding by altering the mobility and structure of an active site loop.</title>
        <authorList>
            <person name="Naik M.T."/>
            <person name="Suree N."/>
            <person name="Ilangovan U."/>
            <person name="Liew C.K."/>
            <person name="Thieu W."/>
            <person name="Campbell D.O."/>
            <person name="Clemens J.J."/>
            <person name="Jung M.E."/>
            <person name="Clubb R.T."/>
        </authorList>
    </citation>
    <scope>CATALYTIC ACTIVITY</scope>
    <scope>ACTIVITY REGULATION</scope>
    <scope>CALCIUM-BINDING</scope>
    <scope>MUTAGENESIS OF GLU-108; ASP-170 AND GLU-171</scope>
</reference>
<reference key="12">
    <citation type="journal article" date="2007" name="Biochemistry">
        <title>Mutational analysis of active site residues in the Staphylococcus aureus transpeptidase SrtA.</title>
        <authorList>
            <person name="Frankel B.A."/>
            <person name="Tong Y."/>
            <person name="Bentley M.L."/>
            <person name="Fitzgerald M.C."/>
            <person name="McCafferty D.G."/>
        </authorList>
    </citation>
    <scope>CATALYTIC ACTIVITY</scope>
    <scope>MUTAGENESIS OF HIS-120; THR-180; LEU-181; ILE-182; THR-183; CYS-184; ASP-185; ASP-186 AND ARG-197</scope>
    <scope>ACTIVE SITE</scope>
</reference>
<reference key="13">
    <citation type="journal article" date="2007" name="Biochemistry">
        <title>Staphylococcus aureus sortase A exists as a dimeric protein in vitro.</title>
        <authorList>
            <person name="Lu C."/>
            <person name="Zhu J."/>
            <person name="Wang Y."/>
            <person name="Umeda A."/>
            <person name="Cowmeadow R.B."/>
            <person name="Lai E."/>
            <person name="Moreno G.N."/>
            <person name="Person M.D."/>
            <person name="Zhang Z."/>
        </authorList>
    </citation>
    <scope>SUBUNIT</scope>
</reference>
<reference key="14">
    <citation type="journal article" date="2016" name="Exp. Biol. Med. (Maywood)">
        <title>Equilibrium of sortase A dimerization on Staphylococcus aureus cell surface mediates its cell wall sorting activity.</title>
        <authorList>
            <person name="Zhu J."/>
            <person name="Xiang L."/>
            <person name="Jiang F."/>
            <person name="Zhang Z.J."/>
        </authorList>
    </citation>
    <scope>ACTIVITY REGULATION</scope>
    <scope>SUBUNIT</scope>
    <scope>SUBCELLULAR LOCATION</scope>
    <scope>IDENTIFICATION BY MASS SPECTROMETRY</scope>
    <scope>MUTAGENESIS OF ASN-132; LYS-137 AND TYR-143</scope>
    <source>
        <strain>RN4220</strain>
    </source>
</reference>
<reference evidence="28" key="15">
    <citation type="journal article" date="2001" name="Proc. Natl. Acad. Sci. U.S.A.">
        <title>Structure of sortase, the transpeptidase that anchors proteins to the cell wall of Staphylococcus aureus.</title>
        <authorList>
            <person name="Ilangovan U."/>
            <person name="Ton-That H."/>
            <person name="Iwahara J."/>
            <person name="Schneewind O."/>
            <person name="Clubb R.T."/>
        </authorList>
    </citation>
    <scope>STRUCTURE BY NMR OF 59-206</scope>
    <scope>CATALYTIC ACTIVITY</scope>
    <scope>ACTIVITY REGULATION</scope>
    <scope>SUBCELLULAR LOCATION</scope>
    <scope>ACTIVE SITE</scope>
    <source>
        <strain>RN4220 / OS2</strain>
    </source>
</reference>
<reference evidence="29 30 31" key="16">
    <citation type="journal article" date="2004" name="J. Biol. Chem.">
        <title>Crystal structures of Staphylococcus aureus sortase A and its substrate complex.</title>
        <authorList>
            <person name="Zong Y."/>
            <person name="Bice T.W."/>
            <person name="Ton-That H."/>
            <person name="Schneewind O."/>
            <person name="Narayana S.V."/>
        </authorList>
    </citation>
    <scope>X-RAY CRYSTALLOGRAPHY (1.80 ANGSTROMS) OF 62-206 OF WILD-TYPE; MUTANT ALA-184 AND MUTANT ALA-184 IN COMPLEX WITH A LPETG PEPTIDE</scope>
    <scope>ACTIVE SITE</scope>
</reference>
<reference evidence="32" key="17">
    <citation type="journal article" date="2009" name="J. Biol. Chem.">
        <title>The structure of the Staphylococcus aureus sortase-substrate complex reveals how the universally conserved LPXTG sorting signal is recognized.</title>
        <authorList>
            <person name="Suree N."/>
            <person name="Liew C.K."/>
            <person name="Villareal V.A."/>
            <person name="Thieu W."/>
            <person name="Fadeev E.A."/>
            <person name="Clemens J.J."/>
            <person name="Jung M.E."/>
            <person name="Clubb R.T."/>
        </authorList>
    </citation>
    <scope>STRUCTURE BY NMR OF 59-206 IN COMPLEX WITH SUBSTRATE ANALOG AND CALCIUM</scope>
    <scope>MUTAGENESIS OF LEU-97; ALA-104 AND ALA-118</scope>
</reference>
<evidence type="ECO:0000255" key="1"/>
<evidence type="ECO:0000256" key="2">
    <source>
        <dbReference type="SAM" id="MobiDB-lite"/>
    </source>
</evidence>
<evidence type="ECO:0000269" key="3">
    <source>
    </source>
</evidence>
<evidence type="ECO:0000269" key="4">
    <source>
    </source>
</evidence>
<evidence type="ECO:0000269" key="5">
    <source>
    </source>
</evidence>
<evidence type="ECO:0000269" key="6">
    <source>
    </source>
</evidence>
<evidence type="ECO:0000269" key="7">
    <source>
    </source>
</evidence>
<evidence type="ECO:0000269" key="8">
    <source>
    </source>
</evidence>
<evidence type="ECO:0000269" key="9">
    <source>
    </source>
</evidence>
<evidence type="ECO:0000269" key="10">
    <source>
    </source>
</evidence>
<evidence type="ECO:0000269" key="11">
    <source>
    </source>
</evidence>
<evidence type="ECO:0000269" key="12">
    <source>
    </source>
</evidence>
<evidence type="ECO:0000269" key="13">
    <source>
    </source>
</evidence>
<evidence type="ECO:0000269" key="14">
    <source>
    </source>
</evidence>
<evidence type="ECO:0000269" key="15">
    <source>
    </source>
</evidence>
<evidence type="ECO:0000269" key="16">
    <source>
    </source>
</evidence>
<evidence type="ECO:0000269" key="17">
    <source>
    </source>
</evidence>
<evidence type="ECO:0000303" key="18">
    <source>
    </source>
</evidence>
<evidence type="ECO:0000305" key="19"/>
<evidence type="ECO:0000305" key="20">
    <source>
    </source>
</evidence>
<evidence type="ECO:0000305" key="21">
    <source>
    </source>
</evidence>
<evidence type="ECO:0000305" key="22">
    <source>
    </source>
</evidence>
<evidence type="ECO:0000305" key="23">
    <source>
    </source>
</evidence>
<evidence type="ECO:0000305" key="24">
    <source>
    </source>
</evidence>
<evidence type="ECO:0000305" key="25">
    <source>
    </source>
</evidence>
<evidence type="ECO:0000305" key="26">
    <source>
    </source>
</evidence>
<evidence type="ECO:0000312" key="27">
    <source>
        <dbReference type="EMBL" id="ABD31836.1"/>
    </source>
</evidence>
<evidence type="ECO:0007744" key="28">
    <source>
        <dbReference type="PDB" id="1IJA"/>
    </source>
</evidence>
<evidence type="ECO:0007744" key="29">
    <source>
        <dbReference type="PDB" id="1T2O"/>
    </source>
</evidence>
<evidence type="ECO:0007744" key="30">
    <source>
        <dbReference type="PDB" id="1T2P"/>
    </source>
</evidence>
<evidence type="ECO:0007744" key="31">
    <source>
        <dbReference type="PDB" id="1T2W"/>
    </source>
</evidence>
<evidence type="ECO:0007744" key="32">
    <source>
        <dbReference type="PDB" id="2KID"/>
    </source>
</evidence>
<evidence type="ECO:0007829" key="33">
    <source>
        <dbReference type="PDB" id="6R1V"/>
    </source>
</evidence>
<protein>
    <recommendedName>
        <fullName evidence="19">Sortase A</fullName>
        <ecNumber evidence="5 7 10 11 12 13 14">3.4.22.70</ecNumber>
    </recommendedName>
    <alternativeName>
        <fullName evidence="18">Surface protein sorting A</fullName>
    </alternativeName>
</protein>
<feature type="chain" id="PRO_0000445268" description="Sortase A">
    <location>
        <begin position="1"/>
        <end position="206"/>
    </location>
</feature>
<feature type="topological domain" description="Cytoplasmic" evidence="20">
    <location>
        <begin position="1"/>
        <end position="6"/>
    </location>
</feature>
<feature type="transmembrane region" description="Helical; Note=Membrane anchor" evidence="1 20">
    <location>
        <begin position="7"/>
        <end position="24"/>
    </location>
</feature>
<feature type="topological domain" description="Extracellular" evidence="20">
    <location>
        <begin position="25"/>
        <end position="206"/>
    </location>
</feature>
<feature type="region of interest" description="Disordered" evidence="2">
    <location>
        <begin position="49"/>
        <end position="69"/>
    </location>
</feature>
<feature type="active site" description="Proton donor/acceptor" evidence="20 21 23 24 26">
    <location>
        <position position="120"/>
    </location>
</feature>
<feature type="active site" description="Acyl-thioester intermediate" evidence="20 21 23 24 26">
    <location>
        <position position="184"/>
    </location>
</feature>
<feature type="binding site" evidence="16 25">
    <location>
        <position position="105"/>
    </location>
    <ligand>
        <name>Ca(2+)</name>
        <dbReference type="ChEBI" id="CHEBI:29108"/>
    </ligand>
</feature>
<feature type="binding site" evidence="16 25">
    <location>
        <position position="108"/>
    </location>
    <ligand>
        <name>Ca(2+)</name>
        <dbReference type="ChEBI" id="CHEBI:29108"/>
    </ligand>
</feature>
<feature type="binding site" evidence="16 25">
    <location>
        <position position="112"/>
    </location>
    <ligand>
        <name>Ca(2+)</name>
        <dbReference type="ChEBI" id="CHEBI:29108"/>
    </ligand>
</feature>
<feature type="binding site" evidence="16 25">
    <location>
        <position position="114"/>
    </location>
    <ligand>
        <name>Ca(2+)</name>
        <dbReference type="ChEBI" id="CHEBI:29108"/>
    </ligand>
</feature>
<feature type="binding site" evidence="16 25">
    <location>
        <position position="171"/>
    </location>
    <ligand>
        <name>Ca(2+)</name>
        <dbReference type="ChEBI" id="CHEBI:29108"/>
    </ligand>
</feature>
<feature type="site" description="Transition state stabilizer" evidence="23 24 26">
    <location>
        <position position="197"/>
    </location>
</feature>
<feature type="mutagenesis site" description="Decrease in activity." evidence="16">
    <original>L</original>
    <variation>A</variation>
    <location>
        <position position="97"/>
    </location>
</feature>
<feature type="mutagenesis site" description="No change in sortase activity." evidence="12">
    <original>N</original>
    <variation>A</variation>
    <variation>Q</variation>
    <location>
        <position position="98"/>
    </location>
</feature>
<feature type="mutagenesis site" description="Decrease in activity." evidence="16">
    <original>A</original>
    <variation>G</variation>
    <location>
        <position position="104"/>
    </location>
</feature>
<feature type="mutagenesis site" description="Retains enzymatic activity. Shows reduced Ca(2+) sensitivity." evidence="13">
    <original>E</original>
    <variation>A</variation>
    <location>
        <position position="108"/>
    </location>
</feature>
<feature type="mutagenesis site" description="Decrease in activity." evidence="16">
    <original>A</original>
    <variation>G</variation>
    <location>
        <position position="118"/>
    </location>
</feature>
<feature type="mutagenesis site" description="Almost loss or loss of activity." evidence="8 14">
    <original>H</original>
    <variation>A</variation>
    <location>
        <position position="120"/>
    </location>
</feature>
<feature type="mutagenesis site" description="Almost loss of activity." evidence="14">
    <original>H</original>
    <variation>Q</variation>
    <location>
        <position position="120"/>
    </location>
</feature>
<feature type="mutagenesis site" description="Does not affect dimerization of the full-length protein. Disrupts dimerization; when associated with A-137 and A-143." evidence="17">
    <original>N</original>
    <variation>A</variation>
    <location>
        <position position="132"/>
    </location>
</feature>
<feature type="mutagenesis site" description="Does not affect dimerization of the full-length protein. Disrupts dimerization; when associated with A-132 and A-143." evidence="17">
    <original>K</original>
    <variation>A</variation>
    <location>
        <position position="137"/>
    </location>
</feature>
<feature type="mutagenesis site" description="Does not affect dimerization of the full-length protein. Disrupts dimerization; when associated with A-132 and A-137." evidence="17">
    <original>Y</original>
    <variation>A</variation>
    <location>
        <position position="143"/>
    </location>
</feature>
<feature type="mutagenesis site" description="Retains enzymatic activity. No change in dependence on Ca(2+)." evidence="13">
    <original>D</original>
    <variation>A</variation>
    <location>
        <position position="170"/>
    </location>
</feature>
<feature type="mutagenesis site" description="Retains enzymatic activity. Shows reduced Ca(2+) sensitivity." evidence="13">
    <original>E</original>
    <variation>A</variation>
    <location>
        <position position="171"/>
    </location>
</feature>
<feature type="mutagenesis site" description="Decrease in catalytic efficiency." evidence="14">
    <original>T</original>
    <variation>A</variation>
    <location>
        <position position="180"/>
    </location>
</feature>
<feature type="mutagenesis site" description="Decrease in catalytic efficiency." evidence="14">
    <original>L</original>
    <variation>A</variation>
    <location>
        <position position="181"/>
    </location>
</feature>
<feature type="mutagenesis site" description="Decrease in catalytic efficiency." evidence="14">
    <original>I</original>
    <variation>A</variation>
    <variation>S</variation>
    <location>
        <position position="182"/>
    </location>
</feature>
<feature type="mutagenesis site" description="Strong decrease in catalytic efficiency." evidence="14">
    <original>T</original>
    <variation>A</variation>
    <location>
        <position position="183"/>
    </location>
</feature>
<feature type="mutagenesis site" description="Abolishes sortase activity." evidence="5 8 14">
    <original>C</original>
    <variation>A</variation>
    <location>
        <position position="184"/>
    </location>
</feature>
<feature type="mutagenesis site" description="Loss of activity." evidence="14">
    <original>C</original>
    <variation>H</variation>
    <location>
        <position position="184"/>
    </location>
</feature>
<feature type="mutagenesis site" description="Abolishes sortase processing; when associated with C-197." evidence="12">
    <original>C</original>
    <variation>R</variation>
    <location>
        <position position="184"/>
    </location>
</feature>
<feature type="mutagenesis site" description="Retains low levels of activity." evidence="14">
    <original>C</original>
    <variation>S</variation>
    <location>
        <position position="184"/>
    </location>
</feature>
<feature type="mutagenesis site" description="No change in activity." evidence="14">
    <original>D</original>
    <variation>A</variation>
    <location>
        <position position="185"/>
    </location>
</feature>
<feature type="mutagenesis site" description="No change in activity." evidence="14">
    <original>D</original>
    <variation>A</variation>
    <location>
        <position position="186"/>
    </location>
</feature>
<feature type="mutagenesis site" description="Decreases the transpeptidase activity." evidence="8">
    <original>W</original>
    <variation>A</variation>
    <location>
        <position position="194"/>
    </location>
</feature>
<feature type="mutagenesis site" description="Strong decrease in catalytic efficiency. Does not affect substrate cleavage specificity. Severe decrease in sortase transpeptidase activity." evidence="12 14">
    <original>R</original>
    <variation>A</variation>
    <variation>K</variation>
    <location>
        <position position="197"/>
    </location>
</feature>
<feature type="mutagenesis site" description="Abolishes sortase processing; when associated with R-184." evidence="12">
    <original>R</original>
    <variation>C</variation>
    <location>
        <position position="197"/>
    </location>
</feature>
<feature type="mutagenesis site" description="Does not affect substrate cleavage specificity. Severe decrease in sortase transpeptidase activity." evidence="12">
    <original>R</original>
    <variation>H</variation>
    <location>
        <position position="197"/>
    </location>
</feature>
<feature type="strand" evidence="33">
    <location>
        <begin position="69"/>
        <end position="71"/>
    </location>
</feature>
<feature type="strand" evidence="33">
    <location>
        <begin position="73"/>
        <end position="78"/>
    </location>
</feature>
<feature type="helix" evidence="33">
    <location>
        <begin position="79"/>
        <end position="81"/>
    </location>
</feature>
<feature type="strand" evidence="33">
    <location>
        <begin position="83"/>
        <end position="88"/>
    </location>
</feature>
<feature type="strand" evidence="33">
    <location>
        <begin position="90"/>
        <end position="92"/>
    </location>
</feature>
<feature type="helix" evidence="33">
    <location>
        <begin position="94"/>
        <end position="99"/>
    </location>
</feature>
<feature type="strand" evidence="33">
    <location>
        <begin position="100"/>
        <end position="104"/>
    </location>
</feature>
<feature type="strand" evidence="33">
    <location>
        <begin position="112"/>
        <end position="120"/>
    </location>
</feature>
<feature type="strand" evidence="33">
    <location>
        <begin position="126"/>
        <end position="129"/>
    </location>
</feature>
<feature type="helix" evidence="33">
    <location>
        <begin position="133"/>
        <end position="135"/>
    </location>
</feature>
<feature type="strand" evidence="33">
    <location>
        <begin position="142"/>
        <end position="146"/>
    </location>
</feature>
<feature type="strand" evidence="33">
    <location>
        <begin position="149"/>
        <end position="161"/>
    </location>
</feature>
<feature type="strand" evidence="33">
    <location>
        <begin position="167"/>
        <end position="170"/>
    </location>
</feature>
<feature type="strand" evidence="33">
    <location>
        <begin position="174"/>
        <end position="187"/>
    </location>
</feature>
<feature type="turn" evidence="33">
    <location>
        <begin position="189"/>
        <end position="191"/>
    </location>
</feature>
<feature type="strand" evidence="33">
    <location>
        <begin position="194"/>
        <end position="204"/>
    </location>
</feature>
<organism>
    <name type="scientific">Staphylococcus aureus (strain NCTC 8325 / PS 47)</name>
    <dbReference type="NCBI Taxonomy" id="93061"/>
    <lineage>
        <taxon>Bacteria</taxon>
        <taxon>Bacillati</taxon>
        <taxon>Bacillota</taxon>
        <taxon>Bacilli</taxon>
        <taxon>Bacillales</taxon>
        <taxon>Staphylococcaceae</taxon>
        <taxon>Staphylococcus</taxon>
    </lineage>
</organism>